<sequence>MRKKPVVIGVAGGSGSGKTTVTKAIYEHFQGHSILMLEQDFYYKDQSHLPFEERLKTNYDHPLAFDNDLLIEHIHKLLNYEPIDKPVYDYTLHTRSNEVIRVEPKDVIILEGILVLEDERLRNLMDIKVYVDTDADIRIIRRLLRDIKERGRTLESVIEQYVNVVRPMHNQFIEPTKRYADIIIPEGGHNHVAIDLMVTKIQTILEQNSIL</sequence>
<gene>
    <name evidence="1" type="primary">udk</name>
    <name type="ordered locus">Aflv_0752</name>
</gene>
<dbReference type="EC" id="2.7.1.48" evidence="1"/>
<dbReference type="EMBL" id="CP000922">
    <property type="protein sequence ID" value="ACJ33131.1"/>
    <property type="molecule type" value="Genomic_DNA"/>
</dbReference>
<dbReference type="RefSeq" id="WP_006320548.1">
    <property type="nucleotide sequence ID" value="NC_011567.1"/>
</dbReference>
<dbReference type="SMR" id="B7GIU0"/>
<dbReference type="STRING" id="491915.Aflv_0752"/>
<dbReference type="GeneID" id="7037009"/>
<dbReference type="KEGG" id="afl:Aflv_0752"/>
<dbReference type="eggNOG" id="COG0572">
    <property type="taxonomic scope" value="Bacteria"/>
</dbReference>
<dbReference type="HOGENOM" id="CLU_021278_1_2_9"/>
<dbReference type="UniPathway" id="UPA00574">
    <property type="reaction ID" value="UER00637"/>
</dbReference>
<dbReference type="UniPathway" id="UPA00579">
    <property type="reaction ID" value="UER00640"/>
</dbReference>
<dbReference type="Proteomes" id="UP000000742">
    <property type="component" value="Chromosome"/>
</dbReference>
<dbReference type="GO" id="GO:0005737">
    <property type="term" value="C:cytoplasm"/>
    <property type="evidence" value="ECO:0007669"/>
    <property type="project" value="UniProtKB-SubCell"/>
</dbReference>
<dbReference type="GO" id="GO:0005524">
    <property type="term" value="F:ATP binding"/>
    <property type="evidence" value="ECO:0007669"/>
    <property type="project" value="UniProtKB-UniRule"/>
</dbReference>
<dbReference type="GO" id="GO:0043771">
    <property type="term" value="F:cytidine kinase activity"/>
    <property type="evidence" value="ECO:0007669"/>
    <property type="project" value="RHEA"/>
</dbReference>
<dbReference type="GO" id="GO:0004849">
    <property type="term" value="F:uridine kinase activity"/>
    <property type="evidence" value="ECO:0007669"/>
    <property type="project" value="UniProtKB-UniRule"/>
</dbReference>
<dbReference type="GO" id="GO:0044211">
    <property type="term" value="P:CTP salvage"/>
    <property type="evidence" value="ECO:0007669"/>
    <property type="project" value="UniProtKB-UniRule"/>
</dbReference>
<dbReference type="GO" id="GO:0044206">
    <property type="term" value="P:UMP salvage"/>
    <property type="evidence" value="ECO:0007669"/>
    <property type="project" value="UniProtKB-UniRule"/>
</dbReference>
<dbReference type="CDD" id="cd02023">
    <property type="entry name" value="UMPK"/>
    <property type="match status" value="1"/>
</dbReference>
<dbReference type="Gene3D" id="3.40.50.300">
    <property type="entry name" value="P-loop containing nucleotide triphosphate hydrolases"/>
    <property type="match status" value="1"/>
</dbReference>
<dbReference type="HAMAP" id="MF_00551">
    <property type="entry name" value="Uridine_kinase"/>
    <property type="match status" value="1"/>
</dbReference>
<dbReference type="InterPro" id="IPR027417">
    <property type="entry name" value="P-loop_NTPase"/>
</dbReference>
<dbReference type="InterPro" id="IPR006083">
    <property type="entry name" value="PRK/URK"/>
</dbReference>
<dbReference type="InterPro" id="IPR026008">
    <property type="entry name" value="Uridine_kinase"/>
</dbReference>
<dbReference type="InterPro" id="IPR000764">
    <property type="entry name" value="Uridine_kinase-like"/>
</dbReference>
<dbReference type="NCBIfam" id="NF004018">
    <property type="entry name" value="PRK05480.1"/>
    <property type="match status" value="1"/>
</dbReference>
<dbReference type="NCBIfam" id="TIGR00235">
    <property type="entry name" value="udk"/>
    <property type="match status" value="1"/>
</dbReference>
<dbReference type="PANTHER" id="PTHR10285">
    <property type="entry name" value="URIDINE KINASE"/>
    <property type="match status" value="1"/>
</dbReference>
<dbReference type="Pfam" id="PF00485">
    <property type="entry name" value="PRK"/>
    <property type="match status" value="1"/>
</dbReference>
<dbReference type="PRINTS" id="PR00988">
    <property type="entry name" value="URIDINKINASE"/>
</dbReference>
<dbReference type="SUPFAM" id="SSF52540">
    <property type="entry name" value="P-loop containing nucleoside triphosphate hydrolases"/>
    <property type="match status" value="1"/>
</dbReference>
<protein>
    <recommendedName>
        <fullName evidence="1">Uridine kinase</fullName>
        <ecNumber evidence="1">2.7.1.48</ecNumber>
    </recommendedName>
    <alternativeName>
        <fullName evidence="1">Cytidine monophosphokinase</fullName>
    </alternativeName>
    <alternativeName>
        <fullName evidence="1">Uridine monophosphokinase</fullName>
    </alternativeName>
</protein>
<organism>
    <name type="scientific">Anoxybacillus flavithermus (strain DSM 21510 / WK1)</name>
    <dbReference type="NCBI Taxonomy" id="491915"/>
    <lineage>
        <taxon>Bacteria</taxon>
        <taxon>Bacillati</taxon>
        <taxon>Bacillota</taxon>
        <taxon>Bacilli</taxon>
        <taxon>Bacillales</taxon>
        <taxon>Anoxybacillaceae</taxon>
        <taxon>Anoxybacillus</taxon>
    </lineage>
</organism>
<evidence type="ECO:0000255" key="1">
    <source>
        <dbReference type="HAMAP-Rule" id="MF_00551"/>
    </source>
</evidence>
<keyword id="KW-0067">ATP-binding</keyword>
<keyword id="KW-0963">Cytoplasm</keyword>
<keyword id="KW-0418">Kinase</keyword>
<keyword id="KW-0547">Nucleotide-binding</keyword>
<keyword id="KW-0808">Transferase</keyword>
<proteinExistence type="inferred from homology"/>
<reference key="1">
    <citation type="journal article" date="2008" name="Genome Biol.">
        <title>Encapsulated in silica: genome, proteome and physiology of the thermophilic bacterium Anoxybacillus flavithermus WK1.</title>
        <authorList>
            <person name="Saw J.H."/>
            <person name="Mountain B.W."/>
            <person name="Feng L."/>
            <person name="Omelchenko M.V."/>
            <person name="Hou S."/>
            <person name="Saito J.A."/>
            <person name="Stott M.B."/>
            <person name="Li D."/>
            <person name="Zhao G."/>
            <person name="Wu J."/>
            <person name="Galperin M.Y."/>
            <person name="Koonin E.V."/>
            <person name="Makarova K.S."/>
            <person name="Wolf Y.I."/>
            <person name="Rigden D.J."/>
            <person name="Dunfield P.F."/>
            <person name="Wang L."/>
            <person name="Alam M."/>
        </authorList>
    </citation>
    <scope>NUCLEOTIDE SEQUENCE [LARGE SCALE GENOMIC DNA]</scope>
    <source>
        <strain>DSM 21510 / WK1</strain>
    </source>
</reference>
<comment type="catalytic activity">
    <reaction evidence="1">
        <text>uridine + ATP = UMP + ADP + H(+)</text>
        <dbReference type="Rhea" id="RHEA:16825"/>
        <dbReference type="ChEBI" id="CHEBI:15378"/>
        <dbReference type="ChEBI" id="CHEBI:16704"/>
        <dbReference type="ChEBI" id="CHEBI:30616"/>
        <dbReference type="ChEBI" id="CHEBI:57865"/>
        <dbReference type="ChEBI" id="CHEBI:456216"/>
        <dbReference type="EC" id="2.7.1.48"/>
    </reaction>
</comment>
<comment type="catalytic activity">
    <reaction evidence="1">
        <text>cytidine + ATP = CMP + ADP + H(+)</text>
        <dbReference type="Rhea" id="RHEA:24674"/>
        <dbReference type="ChEBI" id="CHEBI:15378"/>
        <dbReference type="ChEBI" id="CHEBI:17562"/>
        <dbReference type="ChEBI" id="CHEBI:30616"/>
        <dbReference type="ChEBI" id="CHEBI:60377"/>
        <dbReference type="ChEBI" id="CHEBI:456216"/>
        <dbReference type="EC" id="2.7.1.48"/>
    </reaction>
</comment>
<comment type="pathway">
    <text evidence="1">Pyrimidine metabolism; CTP biosynthesis via salvage pathway; CTP from cytidine: step 1/3.</text>
</comment>
<comment type="pathway">
    <text evidence="1">Pyrimidine metabolism; UMP biosynthesis via salvage pathway; UMP from uridine: step 1/1.</text>
</comment>
<comment type="subcellular location">
    <subcellularLocation>
        <location evidence="1">Cytoplasm</location>
    </subcellularLocation>
</comment>
<comment type="similarity">
    <text evidence="1">Belongs to the uridine kinase family.</text>
</comment>
<feature type="chain" id="PRO_1000129063" description="Uridine kinase">
    <location>
        <begin position="1"/>
        <end position="211"/>
    </location>
</feature>
<feature type="binding site" evidence="1">
    <location>
        <begin position="12"/>
        <end position="19"/>
    </location>
    <ligand>
        <name>ATP</name>
        <dbReference type="ChEBI" id="CHEBI:30616"/>
    </ligand>
</feature>
<name>URK_ANOFW</name>
<accession>B7GIU0</accession>